<name>PRMC_BACSU</name>
<comment type="function">
    <text evidence="1">Methylates the class 1 translation termination release factors RF1/PrfA and RF2/PrfB on the glutamine residue of the universally conserved GGQ motif.</text>
</comment>
<comment type="catalytic activity">
    <reaction evidence="1">
        <text>L-glutaminyl-[peptide chain release factor] + S-adenosyl-L-methionine = N(5)-methyl-L-glutaminyl-[peptide chain release factor] + S-adenosyl-L-homocysteine + H(+)</text>
        <dbReference type="Rhea" id="RHEA:42896"/>
        <dbReference type="Rhea" id="RHEA-COMP:10271"/>
        <dbReference type="Rhea" id="RHEA-COMP:10272"/>
        <dbReference type="ChEBI" id="CHEBI:15378"/>
        <dbReference type="ChEBI" id="CHEBI:30011"/>
        <dbReference type="ChEBI" id="CHEBI:57856"/>
        <dbReference type="ChEBI" id="CHEBI:59789"/>
        <dbReference type="ChEBI" id="CHEBI:61891"/>
        <dbReference type="EC" id="2.1.1.297"/>
    </reaction>
</comment>
<comment type="similarity">
    <text evidence="1">Belongs to the protein N5-glutamine methyltransferase family. PrmC subfamily.</text>
</comment>
<dbReference type="EC" id="2.1.1.297" evidence="1"/>
<dbReference type="EMBL" id="Z49782">
    <property type="protein sequence ID" value="CAA89885.1"/>
    <property type="molecule type" value="Genomic_DNA"/>
</dbReference>
<dbReference type="EMBL" id="AL009126">
    <property type="protein sequence ID" value="CAB15717.1"/>
    <property type="molecule type" value="Genomic_DNA"/>
</dbReference>
<dbReference type="PIR" id="S55438">
    <property type="entry name" value="S55438"/>
</dbReference>
<dbReference type="RefSeq" id="NP_391581.1">
    <property type="nucleotide sequence ID" value="NC_000964.3"/>
</dbReference>
<dbReference type="RefSeq" id="WP_003227647.1">
    <property type="nucleotide sequence ID" value="NZ_OZ025638.1"/>
</dbReference>
<dbReference type="SMR" id="P45873"/>
<dbReference type="FunCoup" id="P45873">
    <property type="interactions" value="669"/>
</dbReference>
<dbReference type="STRING" id="224308.BSU37000"/>
<dbReference type="PaxDb" id="224308-BSU37000"/>
<dbReference type="EnsemblBacteria" id="CAB15717">
    <property type="protein sequence ID" value="CAB15717"/>
    <property type="gene ID" value="BSU_37000"/>
</dbReference>
<dbReference type="GeneID" id="938511"/>
<dbReference type="KEGG" id="bsu:BSU37000"/>
<dbReference type="PATRIC" id="fig|224308.179.peg.4007"/>
<dbReference type="eggNOG" id="COG2890">
    <property type="taxonomic scope" value="Bacteria"/>
</dbReference>
<dbReference type="InParanoid" id="P45873"/>
<dbReference type="OrthoDB" id="9800643at2"/>
<dbReference type="PhylomeDB" id="P45873"/>
<dbReference type="BioCyc" id="BSUB:BSU37000-MONOMER"/>
<dbReference type="Proteomes" id="UP000001570">
    <property type="component" value="Chromosome"/>
</dbReference>
<dbReference type="GO" id="GO:0003676">
    <property type="term" value="F:nucleic acid binding"/>
    <property type="evidence" value="ECO:0007669"/>
    <property type="project" value="InterPro"/>
</dbReference>
<dbReference type="GO" id="GO:0102559">
    <property type="term" value="F:protein-(glutamine-N5) methyltransferase activity"/>
    <property type="evidence" value="ECO:0007669"/>
    <property type="project" value="UniProtKB-EC"/>
</dbReference>
<dbReference type="GO" id="GO:0036009">
    <property type="term" value="F:protein-glutamine N-methyltransferase activity"/>
    <property type="evidence" value="ECO:0000318"/>
    <property type="project" value="GO_Central"/>
</dbReference>
<dbReference type="GO" id="GO:0032259">
    <property type="term" value="P:methylation"/>
    <property type="evidence" value="ECO:0007669"/>
    <property type="project" value="UniProtKB-KW"/>
</dbReference>
<dbReference type="GO" id="GO:0006415">
    <property type="term" value="P:translational termination"/>
    <property type="evidence" value="ECO:0000318"/>
    <property type="project" value="GO_Central"/>
</dbReference>
<dbReference type="CDD" id="cd02440">
    <property type="entry name" value="AdoMet_MTases"/>
    <property type="match status" value="1"/>
</dbReference>
<dbReference type="Gene3D" id="1.10.8.10">
    <property type="entry name" value="DNA helicase RuvA subunit, C-terminal domain"/>
    <property type="match status" value="1"/>
</dbReference>
<dbReference type="Gene3D" id="3.40.50.150">
    <property type="entry name" value="Vaccinia Virus protein VP39"/>
    <property type="match status" value="1"/>
</dbReference>
<dbReference type="HAMAP" id="MF_02126">
    <property type="entry name" value="RF_methyltr_PrmC"/>
    <property type="match status" value="1"/>
</dbReference>
<dbReference type="InterPro" id="IPR002052">
    <property type="entry name" value="DNA_methylase_N6_adenine_CS"/>
</dbReference>
<dbReference type="InterPro" id="IPR004556">
    <property type="entry name" value="HemK-like"/>
</dbReference>
<dbReference type="InterPro" id="IPR050320">
    <property type="entry name" value="N5-glutamine_MTase"/>
</dbReference>
<dbReference type="InterPro" id="IPR040758">
    <property type="entry name" value="PrmC_N"/>
</dbReference>
<dbReference type="InterPro" id="IPR019874">
    <property type="entry name" value="RF_methyltr_PrmC"/>
</dbReference>
<dbReference type="InterPro" id="IPR029063">
    <property type="entry name" value="SAM-dependent_MTases_sf"/>
</dbReference>
<dbReference type="InterPro" id="IPR007848">
    <property type="entry name" value="Small_mtfrase_dom"/>
</dbReference>
<dbReference type="NCBIfam" id="TIGR00536">
    <property type="entry name" value="hemK_fam"/>
    <property type="match status" value="1"/>
</dbReference>
<dbReference type="NCBIfam" id="TIGR03534">
    <property type="entry name" value="RF_mod_PrmC"/>
    <property type="match status" value="1"/>
</dbReference>
<dbReference type="PANTHER" id="PTHR18895">
    <property type="entry name" value="HEMK METHYLTRANSFERASE"/>
    <property type="match status" value="1"/>
</dbReference>
<dbReference type="PANTHER" id="PTHR18895:SF74">
    <property type="entry name" value="MTRF1L RELEASE FACTOR GLUTAMINE METHYLTRANSFERASE"/>
    <property type="match status" value="1"/>
</dbReference>
<dbReference type="Pfam" id="PF05175">
    <property type="entry name" value="MTS"/>
    <property type="match status" value="1"/>
</dbReference>
<dbReference type="Pfam" id="PF17827">
    <property type="entry name" value="PrmC_N"/>
    <property type="match status" value="1"/>
</dbReference>
<dbReference type="SUPFAM" id="SSF53335">
    <property type="entry name" value="S-adenosyl-L-methionine-dependent methyltransferases"/>
    <property type="match status" value="1"/>
</dbReference>
<protein>
    <recommendedName>
        <fullName evidence="1">Release factor glutamine methyltransferase</fullName>
        <shortName evidence="1">RF MTase</shortName>
        <ecNumber evidence="1">2.1.1.297</ecNumber>
    </recommendedName>
    <alternativeName>
        <fullName evidence="1">N5-glutamine methyltransferase PrmC</fullName>
    </alternativeName>
    <alternativeName>
        <fullName evidence="1">Protein-(glutamine-N5) MTase PrmC</fullName>
    </alternativeName>
    <alternativeName>
        <fullName evidence="1">Protein-glutamine N-methyltransferase PrmC</fullName>
    </alternativeName>
</protein>
<organism>
    <name type="scientific">Bacillus subtilis (strain 168)</name>
    <dbReference type="NCBI Taxonomy" id="224308"/>
    <lineage>
        <taxon>Bacteria</taxon>
        <taxon>Bacillati</taxon>
        <taxon>Bacillota</taxon>
        <taxon>Bacilli</taxon>
        <taxon>Bacillales</taxon>
        <taxon>Bacillaceae</taxon>
        <taxon>Bacillus</taxon>
    </lineage>
</organism>
<accession>P45873</accession>
<feature type="chain" id="PRO_0000157160" description="Release factor glutamine methyltransferase">
    <location>
        <begin position="1"/>
        <end position="288"/>
    </location>
</feature>
<feature type="binding site" evidence="1">
    <location>
        <begin position="123"/>
        <end position="127"/>
    </location>
    <ligand>
        <name>S-adenosyl-L-methionine</name>
        <dbReference type="ChEBI" id="CHEBI:59789"/>
    </ligand>
</feature>
<feature type="binding site" evidence="1">
    <location>
        <position position="146"/>
    </location>
    <ligand>
        <name>S-adenosyl-L-methionine</name>
        <dbReference type="ChEBI" id="CHEBI:59789"/>
    </ligand>
</feature>
<feature type="binding site" evidence="1">
    <location>
        <begin position="190"/>
        <end position="193"/>
    </location>
    <ligand>
        <name>substrate</name>
    </ligand>
</feature>
<feature type="binding site" evidence="1">
    <location>
        <position position="190"/>
    </location>
    <ligand>
        <name>S-adenosyl-L-methionine</name>
        <dbReference type="ChEBI" id="CHEBI:59789"/>
    </ligand>
</feature>
<proteinExistence type="inferred from homology"/>
<evidence type="ECO:0000255" key="1">
    <source>
        <dbReference type="HAMAP-Rule" id="MF_02126"/>
    </source>
</evidence>
<keyword id="KW-0489">Methyltransferase</keyword>
<keyword id="KW-1185">Reference proteome</keyword>
<keyword id="KW-0949">S-adenosyl-L-methionine</keyword>
<keyword id="KW-0808">Transferase</keyword>
<sequence>MKTIFEALKWASSYLTEAGREENAAELLLLYDTGMERSKLLASLQEPIGEDELYRFKRHVEMHKEGVPVQYIIGKEFFYGREFMVNDDVLIPRPETEEVVFHLLEKYRSVFSEDGKLEVVDVGTGSGAIAVTLALENQSFSVSAVDISKEALQVASANAEKLGANVRFYQGDLLEPFIKAGKKADIIVSNPPYISEEEMADLSEIVRFHEPLHALTDGGDGLKFYKRFMEDIPLVMKDKVFVVFEIGWKQGAAVKDLILKAFKGAEVEVLKDINGKDRTICALIHKNK</sequence>
<reference key="1">
    <citation type="journal article" date="1997" name="Microbiology">
        <title>The Bacillus subtilis genome from gerBC (311 degrees) to licR (334 degrees).</title>
        <authorList>
            <person name="Presecan E."/>
            <person name="Moszer I."/>
            <person name="Boursier L."/>
            <person name="Cruz Ramos H."/>
            <person name="De La Fuente V."/>
            <person name="Hullo M.-F."/>
            <person name="Lelong C."/>
            <person name="Schleich S."/>
            <person name="Sekowska A."/>
            <person name="Song B.H."/>
            <person name="Villani G."/>
            <person name="Kunst F."/>
            <person name="Danchin A."/>
            <person name="Glaser P."/>
        </authorList>
    </citation>
    <scope>NUCLEOTIDE SEQUENCE [GENOMIC DNA]</scope>
    <source>
        <strain>168</strain>
    </source>
</reference>
<reference key="2">
    <citation type="journal article" date="1997" name="Nature">
        <title>The complete genome sequence of the Gram-positive bacterium Bacillus subtilis.</title>
        <authorList>
            <person name="Kunst F."/>
            <person name="Ogasawara N."/>
            <person name="Moszer I."/>
            <person name="Albertini A.M."/>
            <person name="Alloni G."/>
            <person name="Azevedo V."/>
            <person name="Bertero M.G."/>
            <person name="Bessieres P."/>
            <person name="Bolotin A."/>
            <person name="Borchert S."/>
            <person name="Borriss R."/>
            <person name="Boursier L."/>
            <person name="Brans A."/>
            <person name="Braun M."/>
            <person name="Brignell S.C."/>
            <person name="Bron S."/>
            <person name="Brouillet S."/>
            <person name="Bruschi C.V."/>
            <person name="Caldwell B."/>
            <person name="Capuano V."/>
            <person name="Carter N.M."/>
            <person name="Choi S.-K."/>
            <person name="Codani J.-J."/>
            <person name="Connerton I.F."/>
            <person name="Cummings N.J."/>
            <person name="Daniel R.A."/>
            <person name="Denizot F."/>
            <person name="Devine K.M."/>
            <person name="Duesterhoeft A."/>
            <person name="Ehrlich S.D."/>
            <person name="Emmerson P.T."/>
            <person name="Entian K.-D."/>
            <person name="Errington J."/>
            <person name="Fabret C."/>
            <person name="Ferrari E."/>
            <person name="Foulger D."/>
            <person name="Fritz C."/>
            <person name="Fujita M."/>
            <person name="Fujita Y."/>
            <person name="Fuma S."/>
            <person name="Galizzi A."/>
            <person name="Galleron N."/>
            <person name="Ghim S.-Y."/>
            <person name="Glaser P."/>
            <person name="Goffeau A."/>
            <person name="Golightly E.J."/>
            <person name="Grandi G."/>
            <person name="Guiseppi G."/>
            <person name="Guy B.J."/>
            <person name="Haga K."/>
            <person name="Haiech J."/>
            <person name="Harwood C.R."/>
            <person name="Henaut A."/>
            <person name="Hilbert H."/>
            <person name="Holsappel S."/>
            <person name="Hosono S."/>
            <person name="Hullo M.-F."/>
            <person name="Itaya M."/>
            <person name="Jones L.-M."/>
            <person name="Joris B."/>
            <person name="Karamata D."/>
            <person name="Kasahara Y."/>
            <person name="Klaerr-Blanchard M."/>
            <person name="Klein C."/>
            <person name="Kobayashi Y."/>
            <person name="Koetter P."/>
            <person name="Koningstein G."/>
            <person name="Krogh S."/>
            <person name="Kumano M."/>
            <person name="Kurita K."/>
            <person name="Lapidus A."/>
            <person name="Lardinois S."/>
            <person name="Lauber J."/>
            <person name="Lazarevic V."/>
            <person name="Lee S.-M."/>
            <person name="Levine A."/>
            <person name="Liu H."/>
            <person name="Masuda S."/>
            <person name="Mauel C."/>
            <person name="Medigue C."/>
            <person name="Medina N."/>
            <person name="Mellado R.P."/>
            <person name="Mizuno M."/>
            <person name="Moestl D."/>
            <person name="Nakai S."/>
            <person name="Noback M."/>
            <person name="Noone D."/>
            <person name="O'Reilly M."/>
            <person name="Ogawa K."/>
            <person name="Ogiwara A."/>
            <person name="Oudega B."/>
            <person name="Park S.-H."/>
            <person name="Parro V."/>
            <person name="Pohl T.M."/>
            <person name="Portetelle D."/>
            <person name="Porwollik S."/>
            <person name="Prescott A.M."/>
            <person name="Presecan E."/>
            <person name="Pujic P."/>
            <person name="Purnelle B."/>
            <person name="Rapoport G."/>
            <person name="Rey M."/>
            <person name="Reynolds S."/>
            <person name="Rieger M."/>
            <person name="Rivolta C."/>
            <person name="Rocha E."/>
            <person name="Roche B."/>
            <person name="Rose M."/>
            <person name="Sadaie Y."/>
            <person name="Sato T."/>
            <person name="Scanlan E."/>
            <person name="Schleich S."/>
            <person name="Schroeter R."/>
            <person name="Scoffone F."/>
            <person name="Sekiguchi J."/>
            <person name="Sekowska A."/>
            <person name="Seror S.J."/>
            <person name="Serror P."/>
            <person name="Shin B.-S."/>
            <person name="Soldo B."/>
            <person name="Sorokin A."/>
            <person name="Tacconi E."/>
            <person name="Takagi T."/>
            <person name="Takahashi H."/>
            <person name="Takemaru K."/>
            <person name="Takeuchi M."/>
            <person name="Tamakoshi A."/>
            <person name="Tanaka T."/>
            <person name="Terpstra P."/>
            <person name="Tognoni A."/>
            <person name="Tosato V."/>
            <person name="Uchiyama S."/>
            <person name="Vandenbol M."/>
            <person name="Vannier F."/>
            <person name="Vassarotti A."/>
            <person name="Viari A."/>
            <person name="Wambutt R."/>
            <person name="Wedler E."/>
            <person name="Wedler H."/>
            <person name="Weitzenegger T."/>
            <person name="Winters P."/>
            <person name="Wipat A."/>
            <person name="Yamamoto H."/>
            <person name="Yamane K."/>
            <person name="Yasumoto K."/>
            <person name="Yata K."/>
            <person name="Yoshida K."/>
            <person name="Yoshikawa H.-F."/>
            <person name="Zumstein E."/>
            <person name="Yoshikawa H."/>
            <person name="Danchin A."/>
        </authorList>
    </citation>
    <scope>NUCLEOTIDE SEQUENCE [LARGE SCALE GENOMIC DNA]</scope>
    <source>
        <strain>168</strain>
    </source>
</reference>
<gene>
    <name evidence="1" type="primary">prmC</name>
    <name type="synonym">ywkE</name>
    <name type="ordered locus">BSU37000</name>
</gene>